<comment type="function">
    <text evidence="1">Catalyzes the 2-thiolation of uridine at the wobble position (U34) of tRNA, leading to the formation of s(2)U34.</text>
</comment>
<comment type="catalytic activity">
    <reaction evidence="1">
        <text>S-sulfanyl-L-cysteinyl-[protein] + uridine(34) in tRNA + AH2 + ATP = 2-thiouridine(34) in tRNA + L-cysteinyl-[protein] + A + AMP + diphosphate + H(+)</text>
        <dbReference type="Rhea" id="RHEA:47032"/>
        <dbReference type="Rhea" id="RHEA-COMP:10131"/>
        <dbReference type="Rhea" id="RHEA-COMP:11726"/>
        <dbReference type="Rhea" id="RHEA-COMP:11727"/>
        <dbReference type="Rhea" id="RHEA-COMP:11728"/>
        <dbReference type="ChEBI" id="CHEBI:13193"/>
        <dbReference type="ChEBI" id="CHEBI:15378"/>
        <dbReference type="ChEBI" id="CHEBI:17499"/>
        <dbReference type="ChEBI" id="CHEBI:29950"/>
        <dbReference type="ChEBI" id="CHEBI:30616"/>
        <dbReference type="ChEBI" id="CHEBI:33019"/>
        <dbReference type="ChEBI" id="CHEBI:61963"/>
        <dbReference type="ChEBI" id="CHEBI:65315"/>
        <dbReference type="ChEBI" id="CHEBI:87170"/>
        <dbReference type="ChEBI" id="CHEBI:456215"/>
        <dbReference type="EC" id="2.8.1.13"/>
    </reaction>
</comment>
<comment type="subcellular location">
    <subcellularLocation>
        <location evidence="1">Cytoplasm</location>
    </subcellularLocation>
</comment>
<comment type="similarity">
    <text evidence="1">Belongs to the MnmA/TRMU family.</text>
</comment>
<protein>
    <recommendedName>
        <fullName evidence="1">tRNA-specific 2-thiouridylase MnmA 2</fullName>
        <ecNumber evidence="1">2.8.1.13</ecNumber>
    </recommendedName>
</protein>
<evidence type="ECO:0000255" key="1">
    <source>
        <dbReference type="HAMAP-Rule" id="MF_00144"/>
    </source>
</evidence>
<keyword id="KW-0067">ATP-binding</keyword>
<keyword id="KW-0963">Cytoplasm</keyword>
<keyword id="KW-1015">Disulfide bond</keyword>
<keyword id="KW-0547">Nucleotide-binding</keyword>
<keyword id="KW-0694">RNA-binding</keyword>
<keyword id="KW-0808">Transferase</keyword>
<keyword id="KW-0819">tRNA processing</keyword>
<keyword id="KW-0820">tRNA-binding</keyword>
<accession>B1KZJ2</accession>
<gene>
    <name evidence="1" type="primary">mnmA2</name>
    <name type="ordered locus">CLK_2298</name>
</gene>
<sequence length="353" mass="40105">MSKGIVALAMSGGVDSSVSAYILKERGYEVIGIYMDLWRDEREEYCNKSAAEDARRVAEKLDIPFHIINIGKEFKANVIDYFIDEYLSGRTPNPCVACNKTIKFEAFFNAAKEFGADFMATGHYCKIEERNRRKVIVKAEDDKKDQTYMMYNLKQYQLERTIMPCGEYRKEHIREIAENIGLDVYNKKDSQEICFIPDNDHGGFIKRNYKSKVSEGNFVDKAGKIIGKHKGIIYYTIGQRKGLGIALGKPAYVIDINPITNEVVIGDEEDIFHTELIAKDVNFIPFDKLEKSMELEAKVRYSAKPSKATIIPLGNNKVKVVFQNKQRAITKGQSVVLYDKDMLVGGGIIEEIV</sequence>
<dbReference type="EC" id="2.8.1.13" evidence="1"/>
<dbReference type="EMBL" id="CP000962">
    <property type="protein sequence ID" value="ACA54383.1"/>
    <property type="molecule type" value="Genomic_DNA"/>
</dbReference>
<dbReference type="RefSeq" id="WP_012342497.1">
    <property type="nucleotide sequence ID" value="NC_010520.1"/>
</dbReference>
<dbReference type="SMR" id="B1KZJ2"/>
<dbReference type="KEGG" id="cbl:CLK_2298"/>
<dbReference type="HOGENOM" id="CLU_035188_0_0_9"/>
<dbReference type="GO" id="GO:0005737">
    <property type="term" value="C:cytoplasm"/>
    <property type="evidence" value="ECO:0007669"/>
    <property type="project" value="UniProtKB-SubCell"/>
</dbReference>
<dbReference type="GO" id="GO:0005524">
    <property type="term" value="F:ATP binding"/>
    <property type="evidence" value="ECO:0007669"/>
    <property type="project" value="UniProtKB-KW"/>
</dbReference>
<dbReference type="GO" id="GO:0000049">
    <property type="term" value="F:tRNA binding"/>
    <property type="evidence" value="ECO:0007669"/>
    <property type="project" value="UniProtKB-KW"/>
</dbReference>
<dbReference type="GO" id="GO:0103016">
    <property type="term" value="F:tRNA-uridine 2-sulfurtransferase activity"/>
    <property type="evidence" value="ECO:0007669"/>
    <property type="project" value="UniProtKB-EC"/>
</dbReference>
<dbReference type="GO" id="GO:0002143">
    <property type="term" value="P:tRNA wobble position uridine thiolation"/>
    <property type="evidence" value="ECO:0007669"/>
    <property type="project" value="TreeGrafter"/>
</dbReference>
<dbReference type="CDD" id="cd01998">
    <property type="entry name" value="MnmA_TRMU-like"/>
    <property type="match status" value="1"/>
</dbReference>
<dbReference type="FunFam" id="2.30.30.280:FF:000001">
    <property type="entry name" value="tRNA-specific 2-thiouridylase MnmA"/>
    <property type="match status" value="1"/>
</dbReference>
<dbReference type="FunFam" id="2.40.30.10:FF:000023">
    <property type="entry name" value="tRNA-specific 2-thiouridylase MnmA"/>
    <property type="match status" value="1"/>
</dbReference>
<dbReference type="FunFam" id="3.40.50.620:FF:000115">
    <property type="entry name" value="tRNA-specific 2-thiouridylase MnmA"/>
    <property type="match status" value="1"/>
</dbReference>
<dbReference type="Gene3D" id="2.30.30.280">
    <property type="entry name" value="Adenine nucleotide alpha hydrolases-like domains"/>
    <property type="match status" value="1"/>
</dbReference>
<dbReference type="Gene3D" id="3.40.50.620">
    <property type="entry name" value="HUPs"/>
    <property type="match status" value="1"/>
</dbReference>
<dbReference type="Gene3D" id="2.40.30.10">
    <property type="entry name" value="Translation factors"/>
    <property type="match status" value="1"/>
</dbReference>
<dbReference type="HAMAP" id="MF_00144">
    <property type="entry name" value="tRNA_thiouridyl_MnmA"/>
    <property type="match status" value="1"/>
</dbReference>
<dbReference type="InterPro" id="IPR004506">
    <property type="entry name" value="MnmA-like"/>
</dbReference>
<dbReference type="InterPro" id="IPR046885">
    <property type="entry name" value="MnmA-like_C"/>
</dbReference>
<dbReference type="InterPro" id="IPR046884">
    <property type="entry name" value="MnmA-like_central"/>
</dbReference>
<dbReference type="InterPro" id="IPR023382">
    <property type="entry name" value="MnmA-like_central_sf"/>
</dbReference>
<dbReference type="InterPro" id="IPR014729">
    <property type="entry name" value="Rossmann-like_a/b/a_fold"/>
</dbReference>
<dbReference type="NCBIfam" id="NF001138">
    <property type="entry name" value="PRK00143.1"/>
    <property type="match status" value="1"/>
</dbReference>
<dbReference type="NCBIfam" id="TIGR00420">
    <property type="entry name" value="trmU"/>
    <property type="match status" value="1"/>
</dbReference>
<dbReference type="PANTHER" id="PTHR11933:SF5">
    <property type="entry name" value="MITOCHONDRIAL TRNA-SPECIFIC 2-THIOURIDYLASE 1"/>
    <property type="match status" value="1"/>
</dbReference>
<dbReference type="PANTHER" id="PTHR11933">
    <property type="entry name" value="TRNA 5-METHYLAMINOMETHYL-2-THIOURIDYLATE -METHYLTRANSFERASE"/>
    <property type="match status" value="1"/>
</dbReference>
<dbReference type="Pfam" id="PF03054">
    <property type="entry name" value="tRNA_Me_trans"/>
    <property type="match status" value="1"/>
</dbReference>
<dbReference type="Pfam" id="PF20258">
    <property type="entry name" value="tRNA_Me_trans_C"/>
    <property type="match status" value="1"/>
</dbReference>
<dbReference type="Pfam" id="PF20259">
    <property type="entry name" value="tRNA_Me_trans_M"/>
    <property type="match status" value="1"/>
</dbReference>
<dbReference type="SUPFAM" id="SSF52402">
    <property type="entry name" value="Adenine nucleotide alpha hydrolases-like"/>
    <property type="match status" value="1"/>
</dbReference>
<organism>
    <name type="scientific">Clostridium botulinum (strain Loch Maree / Type A3)</name>
    <dbReference type="NCBI Taxonomy" id="498214"/>
    <lineage>
        <taxon>Bacteria</taxon>
        <taxon>Bacillati</taxon>
        <taxon>Bacillota</taxon>
        <taxon>Clostridia</taxon>
        <taxon>Eubacteriales</taxon>
        <taxon>Clostridiaceae</taxon>
        <taxon>Clostridium</taxon>
    </lineage>
</organism>
<proteinExistence type="inferred from homology"/>
<feature type="chain" id="PRO_0000349593" description="tRNA-specific 2-thiouridylase MnmA 2">
    <location>
        <begin position="1"/>
        <end position="353"/>
    </location>
</feature>
<feature type="region of interest" description="Interaction with tRNA" evidence="1">
    <location>
        <begin position="144"/>
        <end position="146"/>
    </location>
</feature>
<feature type="region of interest" description="Interaction with tRNA" evidence="1">
    <location>
        <begin position="300"/>
        <end position="301"/>
    </location>
</feature>
<feature type="active site" description="Nucleophile" evidence="1">
    <location>
        <position position="98"/>
    </location>
</feature>
<feature type="active site" description="Cysteine persulfide intermediate" evidence="1">
    <location>
        <position position="194"/>
    </location>
</feature>
<feature type="binding site" evidence="1">
    <location>
        <begin position="9"/>
        <end position="16"/>
    </location>
    <ligand>
        <name>ATP</name>
        <dbReference type="ChEBI" id="CHEBI:30616"/>
    </ligand>
</feature>
<feature type="binding site" evidence="1">
    <location>
        <position position="35"/>
    </location>
    <ligand>
        <name>ATP</name>
        <dbReference type="ChEBI" id="CHEBI:30616"/>
    </ligand>
</feature>
<feature type="binding site" evidence="1">
    <location>
        <position position="122"/>
    </location>
    <ligand>
        <name>ATP</name>
        <dbReference type="ChEBI" id="CHEBI:30616"/>
    </ligand>
</feature>
<feature type="site" description="Interaction with tRNA" evidence="1">
    <location>
        <position position="123"/>
    </location>
</feature>
<feature type="site" description="Interaction with tRNA" evidence="1">
    <location>
        <position position="333"/>
    </location>
</feature>
<feature type="disulfide bond" description="Alternate" evidence="1">
    <location>
        <begin position="98"/>
        <end position="194"/>
    </location>
</feature>
<name>MNMA2_CLOBM</name>
<reference key="1">
    <citation type="journal article" date="2007" name="PLoS ONE">
        <title>Analysis of the neurotoxin complex genes in Clostridium botulinum A1-A4 and B1 strains: BoNT/A3, /Ba4 and /B1 clusters are located within plasmids.</title>
        <authorList>
            <person name="Smith T.J."/>
            <person name="Hill K.K."/>
            <person name="Foley B.T."/>
            <person name="Detter J.C."/>
            <person name="Munk A.C."/>
            <person name="Bruce D.C."/>
            <person name="Doggett N.A."/>
            <person name="Smith L.A."/>
            <person name="Marks J.D."/>
            <person name="Xie G."/>
            <person name="Brettin T.S."/>
        </authorList>
    </citation>
    <scope>NUCLEOTIDE SEQUENCE [LARGE SCALE GENOMIC DNA]</scope>
    <source>
        <strain>Loch Maree / Type A3</strain>
    </source>
</reference>